<sequence>MESIGDDDELRSKTVSLPRRISFTILLLLLLISLSTRVSGSLDKSGRRVIEARTGQDLIWVVQLSDLHFSVHHPERAIDFKNIVGPALALINPSLVLITGDLTDGKSKDMLTMKLNEDEWLEYESVMQDVVKRSGLNKSIFYDLRGNHDNFGVPSVGSSVDFFSKYSINGQMGRKGNVNTITVETSERKHLFVGIDTTMHIGLRGPTNLFGHPTDELLSSLDSHLSQWDNQSAKPVAKISFGHFPLSFTALSHSQKSLKDVFLKHSISAYLCGHLHSRFGKNLKRHHHSGGISLSDNDLFQLNMRQSGAESTSNCSFGALPAAEFWEWEMGDWRKNRAMRIMAIDRGHVSYVDLDFKSKPQKTIILPTFPLDSRFMSTSFARHKYECQHMISSSYDAIRAIVFSHSLVVEVVARVYDSSPGFDNLVMEAPMRKHGGDSSSSGATFFSLPWNYRAFEDPLPDRFWLQIEVTDIKGRLTLSEMRPFSINGLSSKVSWTWNEFRVMGCQWAALYYPILWPALYSLFLVFLIPKCIIIVFKKQYTLKKFIAKKGPITLVLWILQDLCRMPVVWFGYMAYLFYLIFFPWFSGEVFADSGDRAYMTIMGWVVTSSGADRKHEYIGQPDVMVVVIPHVVFVVIPSVLVVCCLVAEREIYKDHIRTVSGKKEDDHDRGRKKRSQRRSLLFSNRRLFRKSVLLASLALYWKHFKNCWALGRAYEMNVVHFPGYSLVVPLLLLYVICKTHKVP</sequence>
<organism>
    <name type="scientific">Arabidopsis thaliana</name>
    <name type="common">Mouse-ear cress</name>
    <dbReference type="NCBI Taxonomy" id="3702"/>
    <lineage>
        <taxon>Eukaryota</taxon>
        <taxon>Viridiplantae</taxon>
        <taxon>Streptophyta</taxon>
        <taxon>Embryophyta</taxon>
        <taxon>Tracheophyta</taxon>
        <taxon>Spermatophyta</taxon>
        <taxon>Magnoliopsida</taxon>
        <taxon>eudicotyledons</taxon>
        <taxon>Gunneridae</taxon>
        <taxon>Pentapetalae</taxon>
        <taxon>rosids</taxon>
        <taxon>malvids</taxon>
        <taxon>Brassicales</taxon>
        <taxon>Brassicaceae</taxon>
        <taxon>Camelineae</taxon>
        <taxon>Arabidopsis</taxon>
    </lineage>
</organism>
<keyword id="KW-0378">Hydrolase</keyword>
<keyword id="KW-0472">Membrane</keyword>
<keyword id="KW-0479">Metal-binding</keyword>
<keyword id="KW-1185">Reference proteome</keyword>
<keyword id="KW-0732">Signal</keyword>
<keyword id="KW-0812">Transmembrane</keyword>
<keyword id="KW-1133">Transmembrane helix</keyword>
<dbReference type="EC" id="3.1.-.-"/>
<dbReference type="EMBL" id="AC012328">
    <property type="protein sequence ID" value="AAF26098.1"/>
    <property type="status" value="ALT_SEQ"/>
    <property type="molecule type" value="Genomic_DNA"/>
</dbReference>
<dbReference type="EMBL" id="CP002686">
    <property type="protein sequence ID" value="AEE73927.1"/>
    <property type="molecule type" value="Genomic_DNA"/>
</dbReference>
<dbReference type="EMBL" id="AK175957">
    <property type="protein sequence ID" value="BAD43720.1"/>
    <property type="molecule type" value="mRNA"/>
</dbReference>
<dbReference type="EMBL" id="AK226592">
    <property type="protein sequence ID" value="BAE98707.1"/>
    <property type="molecule type" value="mRNA"/>
</dbReference>
<dbReference type="EMBL" id="AY088809">
    <property type="protein sequence ID" value="AAM67119.1"/>
    <property type="molecule type" value="mRNA"/>
</dbReference>
<dbReference type="RefSeq" id="NP_566200.1">
    <property type="nucleotide sequence ID" value="NM_111201.4"/>
</dbReference>
<dbReference type="BioGRID" id="6624">
    <property type="interactions" value="3"/>
</dbReference>
<dbReference type="FunCoup" id="Q0WVZ1">
    <property type="interactions" value="2698"/>
</dbReference>
<dbReference type="IntAct" id="Q0WVZ1">
    <property type="interactions" value="1"/>
</dbReference>
<dbReference type="PaxDb" id="3702-AT3G03305.1"/>
<dbReference type="ProteomicsDB" id="234658"/>
<dbReference type="EnsemblPlants" id="AT3G03305.1">
    <property type="protein sequence ID" value="AT3G03305.1"/>
    <property type="gene ID" value="AT3G03305"/>
</dbReference>
<dbReference type="GeneID" id="821291"/>
<dbReference type="Gramene" id="AT3G03305.1">
    <property type="protein sequence ID" value="AT3G03305.1"/>
    <property type="gene ID" value="AT3G03305"/>
</dbReference>
<dbReference type="KEGG" id="ath:AT3G03305"/>
<dbReference type="Araport" id="AT3G03305"/>
<dbReference type="TAIR" id="AT3G03305"/>
<dbReference type="eggNOG" id="KOG0701">
    <property type="taxonomic scope" value="Eukaryota"/>
</dbReference>
<dbReference type="HOGENOM" id="CLU_018027_0_0_1"/>
<dbReference type="InParanoid" id="Q0WVZ1"/>
<dbReference type="OMA" id="RCEGVNW"/>
<dbReference type="PhylomeDB" id="Q0WVZ1"/>
<dbReference type="PRO" id="PR:Q0WVZ1"/>
<dbReference type="Proteomes" id="UP000006548">
    <property type="component" value="Chromosome 3"/>
</dbReference>
<dbReference type="ExpressionAtlas" id="Q0WVZ1">
    <property type="expression patterns" value="baseline and differential"/>
</dbReference>
<dbReference type="GO" id="GO:0016020">
    <property type="term" value="C:membrane"/>
    <property type="evidence" value="ECO:0007669"/>
    <property type="project" value="UniProtKB-SubCell"/>
</dbReference>
<dbReference type="GO" id="GO:0016787">
    <property type="term" value="F:hydrolase activity"/>
    <property type="evidence" value="ECO:0007669"/>
    <property type="project" value="UniProtKB-KW"/>
</dbReference>
<dbReference type="GO" id="GO:0046872">
    <property type="term" value="F:metal ion binding"/>
    <property type="evidence" value="ECO:0007669"/>
    <property type="project" value="UniProtKB-KW"/>
</dbReference>
<dbReference type="Gene3D" id="3.60.21.10">
    <property type="match status" value="1"/>
</dbReference>
<dbReference type="InterPro" id="IPR004843">
    <property type="entry name" value="Calcineurin-like_PHP_ApaH"/>
</dbReference>
<dbReference type="InterPro" id="IPR056229">
    <property type="entry name" value="Ig_TMM62"/>
</dbReference>
<dbReference type="InterPro" id="IPR029052">
    <property type="entry name" value="Metallo-depent_PP-like"/>
</dbReference>
<dbReference type="InterPro" id="IPR056230">
    <property type="entry name" value="TMEM62_C"/>
</dbReference>
<dbReference type="PANTHER" id="PTHR14795">
    <property type="entry name" value="HELICASE RELATED"/>
    <property type="match status" value="1"/>
</dbReference>
<dbReference type="PANTHER" id="PTHR14795:SF0">
    <property type="entry name" value="TRANSMEMBRANE PROTEIN 62"/>
    <property type="match status" value="1"/>
</dbReference>
<dbReference type="Pfam" id="PF24384">
    <property type="entry name" value="Ig_TMM62"/>
    <property type="match status" value="1"/>
</dbReference>
<dbReference type="Pfam" id="PF00149">
    <property type="entry name" value="Metallophos"/>
    <property type="match status" value="1"/>
</dbReference>
<dbReference type="Pfam" id="PF24394">
    <property type="entry name" value="TMEM62_C"/>
    <property type="match status" value="1"/>
</dbReference>
<dbReference type="SUPFAM" id="SSF56300">
    <property type="entry name" value="Metallo-dependent phosphatases"/>
    <property type="match status" value="1"/>
</dbReference>
<accession>Q0WVZ1</accession>
<accession>Q680B0</accession>
<accession>Q8L8U3</accession>
<accession>Q9M9P8</accession>
<name>Y3330_ARATH</name>
<feature type="signal peptide" evidence="2">
    <location>
        <begin position="1"/>
        <end position="40"/>
    </location>
</feature>
<feature type="chain" id="PRO_0000404659" description="Putative metallophosphoesterase At3g03305">
    <location>
        <begin position="41"/>
        <end position="743"/>
    </location>
</feature>
<feature type="transmembrane region" description="Helical" evidence="2">
    <location>
        <begin position="514"/>
        <end position="534"/>
    </location>
</feature>
<feature type="transmembrane region" description="Helical" evidence="2">
    <location>
        <begin position="565"/>
        <end position="585"/>
    </location>
</feature>
<feature type="transmembrane region" description="Helical" evidence="2">
    <location>
        <begin position="623"/>
        <end position="643"/>
    </location>
</feature>
<feature type="transmembrane region" description="Helical" evidence="2">
    <location>
        <begin position="687"/>
        <end position="704"/>
    </location>
</feature>
<feature type="transmembrane region" description="Helical" evidence="2">
    <location>
        <begin position="716"/>
        <end position="736"/>
    </location>
</feature>
<feature type="binding site" evidence="1">
    <location>
        <position position="66"/>
    </location>
    <ligand>
        <name>a divalent metal cation</name>
        <dbReference type="ChEBI" id="CHEBI:60240"/>
    </ligand>
</feature>
<feature type="binding site" evidence="1">
    <location>
        <position position="68"/>
    </location>
    <ligand>
        <name>a divalent metal cation</name>
        <dbReference type="ChEBI" id="CHEBI:60240"/>
    </ligand>
</feature>
<feature type="binding site" evidence="1">
    <location>
        <position position="101"/>
    </location>
    <ligand>
        <name>a divalent metal cation</name>
        <dbReference type="ChEBI" id="CHEBI:60240"/>
    </ligand>
</feature>
<feature type="sequence conflict" description="In Ref. 3; BAD43720." evidence="3" ref="3">
    <original>N</original>
    <variation>K</variation>
    <location>
        <position position="303"/>
    </location>
</feature>
<feature type="sequence conflict" description="In Ref. 4; AAM67119." evidence="3" ref="4">
    <original>NEFR</original>
    <variation>SEFL</variation>
    <location>
        <begin position="498"/>
        <end position="501"/>
    </location>
</feature>
<feature type="sequence conflict" description="In Ref. 4; AAM67119." evidence="3" ref="4">
    <original>L</original>
    <variation>F</variation>
    <location>
        <position position="522"/>
    </location>
</feature>
<feature type="sequence conflict" description="In Ref. 4; AAM67119." evidence="3" ref="4">
    <original>A</original>
    <variation>T</variation>
    <location>
        <position position="591"/>
    </location>
</feature>
<gene>
    <name type="ordered locus">At3g03305</name>
    <name type="ORF">T17B22</name>
</gene>
<evidence type="ECO:0000250" key="1"/>
<evidence type="ECO:0000255" key="2"/>
<evidence type="ECO:0000305" key="3"/>
<comment type="cofactor">
    <cofactor evidence="1">
        <name>a divalent metal cation</name>
        <dbReference type="ChEBI" id="CHEBI:60240"/>
    </cofactor>
    <text evidence="1">Divalent metal cation.</text>
</comment>
<comment type="subcellular location">
    <subcellularLocation>
        <location evidence="3">Membrane</location>
        <topology evidence="3">Multi-pass membrane protein</topology>
    </subcellularLocation>
</comment>
<comment type="similarity">
    <text evidence="3">Belongs to the metallophosphoesterase superfamily.</text>
</comment>
<comment type="sequence caution" evidence="3">
    <conflict type="erroneous gene model prediction">
        <sequence resource="EMBL-CDS" id="AAF26098"/>
    </conflict>
    <text>The predicted gene At3g03300 has been split into 2 genes: At3g03300 and At3g03305.</text>
</comment>
<reference key="1">
    <citation type="journal article" date="2000" name="Nature">
        <title>Sequence and analysis of chromosome 3 of the plant Arabidopsis thaliana.</title>
        <authorList>
            <person name="Salanoubat M."/>
            <person name="Lemcke K."/>
            <person name="Rieger M."/>
            <person name="Ansorge W."/>
            <person name="Unseld M."/>
            <person name="Fartmann B."/>
            <person name="Valle G."/>
            <person name="Bloecker H."/>
            <person name="Perez-Alonso M."/>
            <person name="Obermaier B."/>
            <person name="Delseny M."/>
            <person name="Boutry M."/>
            <person name="Grivell L.A."/>
            <person name="Mache R."/>
            <person name="Puigdomenech P."/>
            <person name="De Simone V."/>
            <person name="Choisne N."/>
            <person name="Artiguenave F."/>
            <person name="Robert C."/>
            <person name="Brottier P."/>
            <person name="Wincker P."/>
            <person name="Cattolico L."/>
            <person name="Weissenbach J."/>
            <person name="Saurin W."/>
            <person name="Quetier F."/>
            <person name="Schaefer M."/>
            <person name="Mueller-Auer S."/>
            <person name="Gabel C."/>
            <person name="Fuchs M."/>
            <person name="Benes V."/>
            <person name="Wurmbach E."/>
            <person name="Drzonek H."/>
            <person name="Erfle H."/>
            <person name="Jordan N."/>
            <person name="Bangert S."/>
            <person name="Wiedelmann R."/>
            <person name="Kranz H."/>
            <person name="Voss H."/>
            <person name="Holland R."/>
            <person name="Brandt P."/>
            <person name="Nyakatura G."/>
            <person name="Vezzi A."/>
            <person name="D'Angelo M."/>
            <person name="Pallavicini A."/>
            <person name="Toppo S."/>
            <person name="Simionati B."/>
            <person name="Conrad A."/>
            <person name="Hornischer K."/>
            <person name="Kauer G."/>
            <person name="Loehnert T.-H."/>
            <person name="Nordsiek G."/>
            <person name="Reichelt J."/>
            <person name="Scharfe M."/>
            <person name="Schoen O."/>
            <person name="Bargues M."/>
            <person name="Terol J."/>
            <person name="Climent J."/>
            <person name="Navarro P."/>
            <person name="Collado C."/>
            <person name="Perez-Perez A."/>
            <person name="Ottenwaelder B."/>
            <person name="Duchemin D."/>
            <person name="Cooke R."/>
            <person name="Laudie M."/>
            <person name="Berger-Llauro C."/>
            <person name="Purnelle B."/>
            <person name="Masuy D."/>
            <person name="de Haan M."/>
            <person name="Maarse A.C."/>
            <person name="Alcaraz J.-P."/>
            <person name="Cottet A."/>
            <person name="Casacuberta E."/>
            <person name="Monfort A."/>
            <person name="Argiriou A."/>
            <person name="Flores M."/>
            <person name="Liguori R."/>
            <person name="Vitale D."/>
            <person name="Mannhaupt G."/>
            <person name="Haase D."/>
            <person name="Schoof H."/>
            <person name="Rudd S."/>
            <person name="Zaccaria P."/>
            <person name="Mewes H.-W."/>
            <person name="Mayer K.F.X."/>
            <person name="Kaul S."/>
            <person name="Town C.D."/>
            <person name="Koo H.L."/>
            <person name="Tallon L.J."/>
            <person name="Jenkins J."/>
            <person name="Rooney T."/>
            <person name="Rizzo M."/>
            <person name="Walts A."/>
            <person name="Utterback T."/>
            <person name="Fujii C.Y."/>
            <person name="Shea T.P."/>
            <person name="Creasy T.H."/>
            <person name="Haas B."/>
            <person name="Maiti R."/>
            <person name="Wu D."/>
            <person name="Peterson J."/>
            <person name="Van Aken S."/>
            <person name="Pai G."/>
            <person name="Militscher J."/>
            <person name="Sellers P."/>
            <person name="Gill J.E."/>
            <person name="Feldblyum T.V."/>
            <person name="Preuss D."/>
            <person name="Lin X."/>
            <person name="Nierman W.C."/>
            <person name="Salzberg S.L."/>
            <person name="White O."/>
            <person name="Venter J.C."/>
            <person name="Fraser C.M."/>
            <person name="Kaneko T."/>
            <person name="Nakamura Y."/>
            <person name="Sato S."/>
            <person name="Kato T."/>
            <person name="Asamizu E."/>
            <person name="Sasamoto S."/>
            <person name="Kimura T."/>
            <person name="Idesawa K."/>
            <person name="Kawashima K."/>
            <person name="Kishida Y."/>
            <person name="Kiyokawa C."/>
            <person name="Kohara M."/>
            <person name="Matsumoto M."/>
            <person name="Matsuno A."/>
            <person name="Muraki A."/>
            <person name="Nakayama S."/>
            <person name="Nakazaki N."/>
            <person name="Shinpo S."/>
            <person name="Takeuchi C."/>
            <person name="Wada T."/>
            <person name="Watanabe A."/>
            <person name="Yamada M."/>
            <person name="Yasuda M."/>
            <person name="Tabata S."/>
        </authorList>
    </citation>
    <scope>NUCLEOTIDE SEQUENCE [LARGE SCALE GENOMIC DNA]</scope>
    <source>
        <strain>cv. Columbia</strain>
    </source>
</reference>
<reference key="2">
    <citation type="journal article" date="2017" name="Plant J.">
        <title>Araport11: a complete reannotation of the Arabidopsis thaliana reference genome.</title>
        <authorList>
            <person name="Cheng C.Y."/>
            <person name="Krishnakumar V."/>
            <person name="Chan A.P."/>
            <person name="Thibaud-Nissen F."/>
            <person name="Schobel S."/>
            <person name="Town C.D."/>
        </authorList>
    </citation>
    <scope>GENOME REANNOTATION</scope>
    <source>
        <strain>cv. Columbia</strain>
    </source>
</reference>
<reference key="3">
    <citation type="submission" date="2006-07" db="EMBL/GenBank/DDBJ databases">
        <title>Large-scale analysis of RIKEN Arabidopsis full-length (RAFL) cDNAs.</title>
        <authorList>
            <person name="Totoki Y."/>
            <person name="Seki M."/>
            <person name="Ishida J."/>
            <person name="Nakajima M."/>
            <person name="Enju A."/>
            <person name="Kamiya A."/>
            <person name="Narusaka M."/>
            <person name="Shin-i T."/>
            <person name="Nakagawa M."/>
            <person name="Sakamoto N."/>
            <person name="Oishi K."/>
            <person name="Kohara Y."/>
            <person name="Kobayashi M."/>
            <person name="Toyoda A."/>
            <person name="Sakaki Y."/>
            <person name="Sakurai T."/>
            <person name="Iida K."/>
            <person name="Akiyama K."/>
            <person name="Satou M."/>
            <person name="Toyoda T."/>
            <person name="Konagaya A."/>
            <person name="Carninci P."/>
            <person name="Kawai J."/>
            <person name="Hayashizaki Y."/>
            <person name="Shinozaki K."/>
        </authorList>
    </citation>
    <scope>NUCLEOTIDE SEQUENCE [LARGE SCALE MRNA]</scope>
    <source>
        <strain>cv. Columbia</strain>
    </source>
</reference>
<reference key="4">
    <citation type="submission" date="2002-03" db="EMBL/GenBank/DDBJ databases">
        <title>Full-length cDNA from Arabidopsis thaliana.</title>
        <authorList>
            <person name="Brover V.V."/>
            <person name="Troukhan M.E."/>
            <person name="Alexandrov N.A."/>
            <person name="Lu Y.-P."/>
            <person name="Flavell R.B."/>
            <person name="Feldmann K.A."/>
        </authorList>
    </citation>
    <scope>NUCLEOTIDE SEQUENCE [LARGE SCALE MRNA]</scope>
</reference>
<proteinExistence type="evidence at transcript level"/>
<protein>
    <recommendedName>
        <fullName>Putative metallophosphoesterase At3g03305</fullName>
        <ecNumber>3.1.-.-</ecNumber>
    </recommendedName>
</protein>